<protein>
    <recommendedName>
        <fullName>Uncharacterized AAA domain-containing protein ycf46</fullName>
    </recommendedName>
</protein>
<gene>
    <name type="primary">ycf46</name>
    <name type="ordered locus">Grc000001</name>
</gene>
<geneLocation type="chloroplast"/>
<comment type="subcellular location">
    <subcellularLocation>
        <location>Plastid</location>
        <location>Chloroplast</location>
    </subcellularLocation>
</comment>
<comment type="similarity">
    <text evidence="2">Belongs to the AAA ATPase family. Highly divergent.</text>
</comment>
<evidence type="ECO:0000255" key="1"/>
<evidence type="ECO:0000305" key="2"/>
<reference key="1">
    <citation type="journal article" date="2004" name="J. Mol. Evol.">
        <title>Comparative analysis of the complete plastid genome sequence of the red alga Gracilaria tenuistipitata var. liui provides insights into the evolution of rhodoplasts and their relationship to other plastids.</title>
        <authorList>
            <person name="Hagopian J.C."/>
            <person name="Reis M."/>
            <person name="Kitajima J.P."/>
            <person name="Bhattacharya D."/>
            <person name="de Oliveira M.C."/>
        </authorList>
    </citation>
    <scope>NUCLEOTIDE SEQUENCE [LARGE SCALE GENOMIC DNA]</scope>
</reference>
<keyword id="KW-0067">ATP-binding</keyword>
<keyword id="KW-0150">Chloroplast</keyword>
<keyword id="KW-0547">Nucleotide-binding</keyword>
<keyword id="KW-0934">Plastid</keyword>
<organism>
    <name type="scientific">Gracilaria tenuistipitata var. liui</name>
    <name type="common">Red alga</name>
    <dbReference type="NCBI Taxonomy" id="285951"/>
    <lineage>
        <taxon>Eukaryota</taxon>
        <taxon>Rhodophyta</taxon>
        <taxon>Florideophyceae</taxon>
        <taxon>Rhodymeniophycidae</taxon>
        <taxon>Gracilariales</taxon>
        <taxon>Gracilariaceae</taxon>
        <taxon>Gracilaria</taxon>
        <taxon>Gracilaria tenuistipitata</taxon>
    </lineage>
</organism>
<feature type="chain" id="PRO_0000277386" description="Uncharacterized AAA domain-containing protein ycf46">
    <location>
        <begin position="1"/>
        <end position="491"/>
    </location>
</feature>
<feature type="binding site" evidence="1">
    <location>
        <begin position="267"/>
        <end position="274"/>
    </location>
    <ligand>
        <name>ATP</name>
        <dbReference type="ChEBI" id="CHEBI:30616"/>
    </ligand>
</feature>
<accession>Q6B952</accession>
<sequence>MSFKNNLKLLLSTQNVLIYILNSEEERLEYKIHLMIRQNIKKTIYCWNFIDGYYNNPNYLNKAIRNPLQAIEFIEQLNFPTSTIFFLKDFHVFINDISVIRKIKNLSRFLKQANSSIIISASEMQVPSLLKDFITVLEFPLPNYEEINLELHRLFKIMNVDSSIYSEYFHDLTLAYRGFSIEKIRISIAKLLTSNLSSTHLIKNILYEKRQLIEQTDVLEFYAVDYSFDNVGGLNVLKDWLNKRSKAFSKQAKNYGLTVPKGILLIGIQGTGKSLIAKAISGQWNLPLLKLDMGKIFASLVGQSEERMRHMIKTAEQSSPCILWIDEIDKCFTRLNNYTDSGTNGRVLSTMLTWLSEKKKPVFVIATANQVLSLPSELLRKGRFDEIFFLNLPSLEEREKIFQIHLMKFRPLSWRKYDIKYLSKLTDQFSGAEIEQAIIEAMYNAFYEKREFSTQDIINAINNFVPLAFTDTCNISAIQDWAISGKIRMAS</sequence>
<name>YCF46_GRATL</name>
<dbReference type="EMBL" id="AY673996">
    <property type="protein sequence ID" value="AAT79583.1"/>
    <property type="molecule type" value="Genomic_DNA"/>
</dbReference>
<dbReference type="RefSeq" id="YP_063508.1">
    <property type="nucleotide sequence ID" value="NC_006137.1"/>
</dbReference>
<dbReference type="SMR" id="Q6B952"/>
<dbReference type="GeneID" id="2944096"/>
<dbReference type="GO" id="GO:0009507">
    <property type="term" value="C:chloroplast"/>
    <property type="evidence" value="ECO:0007669"/>
    <property type="project" value="UniProtKB-SubCell"/>
</dbReference>
<dbReference type="GO" id="GO:0005524">
    <property type="term" value="F:ATP binding"/>
    <property type="evidence" value="ECO:0007669"/>
    <property type="project" value="UniProtKB-KW"/>
</dbReference>
<dbReference type="GO" id="GO:0016887">
    <property type="term" value="F:ATP hydrolysis activity"/>
    <property type="evidence" value="ECO:0007669"/>
    <property type="project" value="InterPro"/>
</dbReference>
<dbReference type="CDD" id="cd19507">
    <property type="entry name" value="RecA-like_Ycf46-like"/>
    <property type="match status" value="1"/>
</dbReference>
<dbReference type="Gene3D" id="1.10.8.60">
    <property type="match status" value="1"/>
</dbReference>
<dbReference type="Gene3D" id="3.40.50.300">
    <property type="entry name" value="P-loop containing nucleotide triphosphate hydrolases"/>
    <property type="match status" value="1"/>
</dbReference>
<dbReference type="InterPro" id="IPR003593">
    <property type="entry name" value="AAA+_ATPase"/>
</dbReference>
<dbReference type="InterPro" id="IPR052381">
    <property type="entry name" value="AAA_domain_protein"/>
</dbReference>
<dbReference type="InterPro" id="IPR041569">
    <property type="entry name" value="AAA_lid_3"/>
</dbReference>
<dbReference type="InterPro" id="IPR003959">
    <property type="entry name" value="ATPase_AAA_core"/>
</dbReference>
<dbReference type="InterPro" id="IPR027417">
    <property type="entry name" value="P-loop_NTPase"/>
</dbReference>
<dbReference type="PANTHER" id="PTHR42960">
    <property type="entry name" value="YCF46 PROTEIN"/>
    <property type="match status" value="1"/>
</dbReference>
<dbReference type="PANTHER" id="PTHR42960:SF1">
    <property type="entry name" value="YCF46 PROTEIN"/>
    <property type="match status" value="1"/>
</dbReference>
<dbReference type="Pfam" id="PF00004">
    <property type="entry name" value="AAA"/>
    <property type="match status" value="1"/>
</dbReference>
<dbReference type="Pfam" id="PF17862">
    <property type="entry name" value="AAA_lid_3"/>
    <property type="match status" value="1"/>
</dbReference>
<dbReference type="SMART" id="SM00382">
    <property type="entry name" value="AAA"/>
    <property type="match status" value="1"/>
</dbReference>
<dbReference type="SUPFAM" id="SSF52540">
    <property type="entry name" value="P-loop containing nucleoside triphosphate hydrolases"/>
    <property type="match status" value="1"/>
</dbReference>
<proteinExistence type="inferred from homology"/>